<reference key="1">
    <citation type="submission" date="1995-04" db="EMBL/GenBank/DDBJ databases">
        <authorList>
            <person name="Smith D.R."/>
            <person name="Robison K."/>
        </authorList>
    </citation>
    <scope>NUCLEOTIDE SEQUENCE [GENOMIC DNA]</scope>
</reference>
<reference key="2">
    <citation type="journal article" date="2001" name="Nature">
        <title>Massive gene decay in the leprosy bacillus.</title>
        <authorList>
            <person name="Cole S.T."/>
            <person name="Eiglmeier K."/>
            <person name="Parkhill J."/>
            <person name="James K.D."/>
            <person name="Thomson N.R."/>
            <person name="Wheeler P.R."/>
            <person name="Honore N."/>
            <person name="Garnier T."/>
            <person name="Churcher C.M."/>
            <person name="Harris D.E."/>
            <person name="Mungall K.L."/>
            <person name="Basham D."/>
            <person name="Brown D."/>
            <person name="Chillingworth T."/>
            <person name="Connor R."/>
            <person name="Davies R.M."/>
            <person name="Devlin K."/>
            <person name="Duthoy S."/>
            <person name="Feltwell T."/>
            <person name="Fraser A."/>
            <person name="Hamlin N."/>
            <person name="Holroyd S."/>
            <person name="Hornsby T."/>
            <person name="Jagels K."/>
            <person name="Lacroix C."/>
            <person name="Maclean J."/>
            <person name="Moule S."/>
            <person name="Murphy L.D."/>
            <person name="Oliver K."/>
            <person name="Quail M.A."/>
            <person name="Rajandream M.A."/>
            <person name="Rutherford K.M."/>
            <person name="Rutter S."/>
            <person name="Seeger K."/>
            <person name="Simon S."/>
            <person name="Simmonds M."/>
            <person name="Skelton J."/>
            <person name="Squares R."/>
            <person name="Squares S."/>
            <person name="Stevens K."/>
            <person name="Taylor K."/>
            <person name="Whitehead S."/>
            <person name="Woodward J.R."/>
            <person name="Barrell B.G."/>
        </authorList>
    </citation>
    <scope>NUCLEOTIDE SEQUENCE [LARGE SCALE GENOMIC DNA]</scope>
    <source>
        <strain>TN</strain>
    </source>
</reference>
<accession>Q50023</accession>
<accession>O05759</accession>
<keyword id="KW-0067">ATP-binding</keyword>
<keyword id="KW-0963">Cytoplasm</keyword>
<keyword id="KW-0436">Ligase</keyword>
<keyword id="KW-0460">Magnesium</keyword>
<keyword id="KW-0479">Metal-binding</keyword>
<keyword id="KW-0547">Nucleotide-binding</keyword>
<keyword id="KW-0658">Purine biosynthesis</keyword>
<keyword id="KW-1185">Reference proteome</keyword>
<protein>
    <recommendedName>
        <fullName evidence="1">Phosphoribosylformylglycinamidine synthase subunit PurL</fullName>
        <shortName evidence="1">FGAM synthase</shortName>
        <ecNumber evidence="1">6.3.5.3</ecNumber>
    </recommendedName>
    <alternativeName>
        <fullName evidence="1">Formylglycinamide ribonucleotide amidotransferase subunit II</fullName>
        <shortName evidence="1">FGAR amidotransferase II</shortName>
        <shortName evidence="1">FGAR-AT II</shortName>
    </alternativeName>
    <alternativeName>
        <fullName evidence="1">Glutamine amidotransferase PurL</fullName>
    </alternativeName>
    <alternativeName>
        <fullName evidence="1">Phosphoribosylformylglycinamidine synthase subunit II</fullName>
    </alternativeName>
</protein>
<sequence>MIDTVEYAATTPDQPQPFAELGLREDEYQRVREILGRRPTDTELAMYSVMWSEHCSYKSSKVHLRYFGETTTEEMRTGMLAGIGENAGVVDIGDGWAVTFKVESHNHPSYVEPYQGAATGVGGIVRDIMAMGARPVAVMDQLRFGAADALDTRRVLDGVVRGIGGYGNSLGLPNIGGETVFDSCYDGNPLVNALCVGVLRQEDLHLAFASGAGNKIILFGACTGLDGIGGVSVLASDTFDAEGARKKLPSVQVGDPFMEKVLIECCLELYAGGLVIGIQDLGGAGLSCATSELASAGDVGMAIQLDTVPRRAKDMTPAEVFCSESQERMCAVVAPENVDAFLAVCRKWEVLATVIGEVTDGDRLRITWHGETVVDVPPRTVAHEGPVYQRPVSRPESQEALNADSSKGLPRPVSGDELRATLLALLGSPHLCSRAFITEQYDRYVRGNTVLAEHADAGVLRIDESTGRGIALSTDASGRYTRLDPYAGAQLALAEAYRNVAVTGATPVAVTNCLNFGSPEDPGVMWQFAQAVRGLADGCAALKIPVTGGNVSFYNQTGAVAILPTPVVGVLGVLDNVARRIHTSLGTEPGEILMLLGDTYDEFDGSVWAQVMAGHLGGLPPMVDLAREKLLAEVLSSASRDELVSAAHDLSEGGLAQAIVESALAGETGCRIALPEDADPFVMLFSESAGRVLVAVPRPEESRFRSMCEARGLPAMRIGVVDQGSDSIEVRGQFTVSLAELRMTFEAVLPRFFG</sequence>
<organism>
    <name type="scientific">Mycobacterium leprae (strain TN)</name>
    <dbReference type="NCBI Taxonomy" id="272631"/>
    <lineage>
        <taxon>Bacteria</taxon>
        <taxon>Bacillati</taxon>
        <taxon>Actinomycetota</taxon>
        <taxon>Actinomycetes</taxon>
        <taxon>Mycobacteriales</taxon>
        <taxon>Mycobacteriaceae</taxon>
        <taxon>Mycobacterium</taxon>
    </lineage>
</organism>
<comment type="function">
    <text evidence="1">Part of the phosphoribosylformylglycinamidine synthase complex involved in the purines biosynthetic pathway. Catalyzes the ATP-dependent conversion of formylglycinamide ribonucleotide (FGAR) and glutamine to yield formylglycinamidine ribonucleotide (FGAM) and glutamate. The FGAM synthase complex is composed of three subunits. PurQ produces an ammonia molecule by converting glutamine to glutamate. PurL transfers the ammonia molecule to FGAR to form FGAM in an ATP-dependent manner. PurS interacts with PurQ and PurL and is thought to assist in the transfer of the ammonia molecule from PurQ to PurL.</text>
</comment>
<comment type="catalytic activity">
    <reaction evidence="1">
        <text>N(2)-formyl-N(1)-(5-phospho-beta-D-ribosyl)glycinamide + L-glutamine + ATP + H2O = 2-formamido-N(1)-(5-O-phospho-beta-D-ribosyl)acetamidine + L-glutamate + ADP + phosphate + H(+)</text>
        <dbReference type="Rhea" id="RHEA:17129"/>
        <dbReference type="ChEBI" id="CHEBI:15377"/>
        <dbReference type="ChEBI" id="CHEBI:15378"/>
        <dbReference type="ChEBI" id="CHEBI:29985"/>
        <dbReference type="ChEBI" id="CHEBI:30616"/>
        <dbReference type="ChEBI" id="CHEBI:43474"/>
        <dbReference type="ChEBI" id="CHEBI:58359"/>
        <dbReference type="ChEBI" id="CHEBI:147286"/>
        <dbReference type="ChEBI" id="CHEBI:147287"/>
        <dbReference type="ChEBI" id="CHEBI:456216"/>
        <dbReference type="EC" id="6.3.5.3"/>
    </reaction>
</comment>
<comment type="pathway">
    <text evidence="1">Purine metabolism; IMP biosynthesis via de novo pathway; 5-amino-1-(5-phospho-D-ribosyl)imidazole from N(2)-formyl-N(1)-(5-phospho-D-ribosyl)glycinamide: step 1/2.</text>
</comment>
<comment type="subunit">
    <text evidence="1">Monomer. Part of the FGAM synthase complex composed of 1 PurL, 1 PurQ and 2 PurS subunits.</text>
</comment>
<comment type="subcellular location">
    <subcellularLocation>
        <location evidence="1">Cytoplasm</location>
    </subcellularLocation>
</comment>
<comment type="similarity">
    <text evidence="1">Belongs to the FGAMS family.</text>
</comment>
<proteinExistence type="inferred from homology"/>
<evidence type="ECO:0000255" key="1">
    <source>
        <dbReference type="HAMAP-Rule" id="MF_00420"/>
    </source>
</evidence>
<evidence type="ECO:0000256" key="2">
    <source>
        <dbReference type="SAM" id="MobiDB-lite"/>
    </source>
</evidence>
<dbReference type="EC" id="6.3.5.3" evidence="1"/>
<dbReference type="EMBL" id="U15182">
    <property type="protein sequence ID" value="AAA62986.1"/>
    <property type="molecule type" value="Genomic_DNA"/>
</dbReference>
<dbReference type="EMBL" id="Z95151">
    <property type="protein sequence ID" value="CAB08431.1"/>
    <property type="molecule type" value="Genomic_DNA"/>
</dbReference>
<dbReference type="EMBL" id="AL583924">
    <property type="protein sequence ID" value="CAC31166.1"/>
    <property type="molecule type" value="Genomic_DNA"/>
</dbReference>
<dbReference type="PIR" id="F87185">
    <property type="entry name" value="F87185"/>
</dbReference>
<dbReference type="RefSeq" id="NP_302451.1">
    <property type="nucleotide sequence ID" value="NC_002677.1"/>
</dbReference>
<dbReference type="RefSeq" id="WP_010908771.1">
    <property type="nucleotide sequence ID" value="NC_002677.1"/>
</dbReference>
<dbReference type="SMR" id="Q50023"/>
<dbReference type="STRING" id="272631.gene:17576068"/>
<dbReference type="KEGG" id="mle:ML2211"/>
<dbReference type="PATRIC" id="fig|272631.5.peg.4186"/>
<dbReference type="Leproma" id="ML2211"/>
<dbReference type="eggNOG" id="COG0046">
    <property type="taxonomic scope" value="Bacteria"/>
</dbReference>
<dbReference type="HOGENOM" id="CLU_003100_0_1_11"/>
<dbReference type="OrthoDB" id="9804441at2"/>
<dbReference type="UniPathway" id="UPA00074">
    <property type="reaction ID" value="UER00128"/>
</dbReference>
<dbReference type="Proteomes" id="UP000000806">
    <property type="component" value="Chromosome"/>
</dbReference>
<dbReference type="GO" id="GO:0005737">
    <property type="term" value="C:cytoplasm"/>
    <property type="evidence" value="ECO:0007669"/>
    <property type="project" value="UniProtKB-SubCell"/>
</dbReference>
<dbReference type="GO" id="GO:0005524">
    <property type="term" value="F:ATP binding"/>
    <property type="evidence" value="ECO:0007669"/>
    <property type="project" value="UniProtKB-UniRule"/>
</dbReference>
<dbReference type="GO" id="GO:0000287">
    <property type="term" value="F:magnesium ion binding"/>
    <property type="evidence" value="ECO:0007669"/>
    <property type="project" value="UniProtKB-UniRule"/>
</dbReference>
<dbReference type="GO" id="GO:0004642">
    <property type="term" value="F:phosphoribosylformylglycinamidine synthase activity"/>
    <property type="evidence" value="ECO:0007669"/>
    <property type="project" value="UniProtKB-UniRule"/>
</dbReference>
<dbReference type="GO" id="GO:0006189">
    <property type="term" value="P:'de novo' IMP biosynthetic process"/>
    <property type="evidence" value="ECO:0007669"/>
    <property type="project" value="UniProtKB-UniRule"/>
</dbReference>
<dbReference type="CDD" id="cd02203">
    <property type="entry name" value="PurL_repeat1"/>
    <property type="match status" value="1"/>
</dbReference>
<dbReference type="CDD" id="cd02204">
    <property type="entry name" value="PurL_repeat2"/>
    <property type="match status" value="1"/>
</dbReference>
<dbReference type="FunFam" id="3.30.1330.10:FF:000004">
    <property type="entry name" value="Phosphoribosylformylglycinamidine synthase subunit PurL"/>
    <property type="match status" value="1"/>
</dbReference>
<dbReference type="FunFam" id="3.30.1330.10:FF:000021">
    <property type="entry name" value="Phosphoribosylformylglycinamidine synthase subunit PurL"/>
    <property type="match status" value="1"/>
</dbReference>
<dbReference type="FunFam" id="3.90.650.10:FF:000009">
    <property type="entry name" value="Phosphoribosylformylglycinamidine synthase subunit PurL"/>
    <property type="match status" value="1"/>
</dbReference>
<dbReference type="Gene3D" id="3.90.650.10">
    <property type="entry name" value="PurM-like C-terminal domain"/>
    <property type="match status" value="2"/>
</dbReference>
<dbReference type="Gene3D" id="3.30.1330.10">
    <property type="entry name" value="PurM-like, N-terminal domain"/>
    <property type="match status" value="2"/>
</dbReference>
<dbReference type="HAMAP" id="MF_00420">
    <property type="entry name" value="PurL_2"/>
    <property type="match status" value="1"/>
</dbReference>
<dbReference type="InterPro" id="IPR010074">
    <property type="entry name" value="PRibForGlyAmidine_synth_PurL"/>
</dbReference>
<dbReference type="InterPro" id="IPR041609">
    <property type="entry name" value="PurL_linker"/>
</dbReference>
<dbReference type="InterPro" id="IPR010918">
    <property type="entry name" value="PurM-like_C_dom"/>
</dbReference>
<dbReference type="InterPro" id="IPR036676">
    <property type="entry name" value="PurM-like_C_sf"/>
</dbReference>
<dbReference type="InterPro" id="IPR016188">
    <property type="entry name" value="PurM-like_N"/>
</dbReference>
<dbReference type="InterPro" id="IPR036921">
    <property type="entry name" value="PurM-like_N_sf"/>
</dbReference>
<dbReference type="NCBIfam" id="TIGR01736">
    <property type="entry name" value="FGAM_synth_II"/>
    <property type="match status" value="1"/>
</dbReference>
<dbReference type="NCBIfam" id="NF002290">
    <property type="entry name" value="PRK01213.1"/>
    <property type="match status" value="1"/>
</dbReference>
<dbReference type="PANTHER" id="PTHR43555">
    <property type="entry name" value="PHOSPHORIBOSYLFORMYLGLYCINAMIDINE SYNTHASE SUBUNIT PURL"/>
    <property type="match status" value="1"/>
</dbReference>
<dbReference type="PANTHER" id="PTHR43555:SF1">
    <property type="entry name" value="PHOSPHORIBOSYLFORMYLGLYCINAMIDINE SYNTHASE SUBUNIT PURL"/>
    <property type="match status" value="1"/>
</dbReference>
<dbReference type="Pfam" id="PF00586">
    <property type="entry name" value="AIRS"/>
    <property type="match status" value="2"/>
</dbReference>
<dbReference type="Pfam" id="PF02769">
    <property type="entry name" value="AIRS_C"/>
    <property type="match status" value="2"/>
</dbReference>
<dbReference type="Pfam" id="PF18072">
    <property type="entry name" value="FGAR-AT_linker"/>
    <property type="match status" value="1"/>
</dbReference>
<dbReference type="PIRSF" id="PIRSF001587">
    <property type="entry name" value="FGAM_synthase_II"/>
    <property type="match status" value="1"/>
</dbReference>
<dbReference type="SUPFAM" id="SSF56042">
    <property type="entry name" value="PurM C-terminal domain-like"/>
    <property type="match status" value="2"/>
</dbReference>
<dbReference type="SUPFAM" id="SSF55326">
    <property type="entry name" value="PurM N-terminal domain-like"/>
    <property type="match status" value="2"/>
</dbReference>
<gene>
    <name evidence="1" type="primary">purL</name>
    <name type="ordered locus">ML2211</name>
    <name type="ORF">MLCB5.30</name>
</gene>
<feature type="chain" id="PRO_0000100471" description="Phosphoribosylformylglycinamidine synthase subunit PurL">
    <location>
        <begin position="1"/>
        <end position="754"/>
    </location>
</feature>
<feature type="region of interest" description="Disordered" evidence="2">
    <location>
        <begin position="386"/>
        <end position="412"/>
    </location>
</feature>
<feature type="active site" evidence="1">
    <location>
        <position position="54"/>
    </location>
</feature>
<feature type="active site" description="Proton acceptor" evidence="1">
    <location>
        <position position="105"/>
    </location>
</feature>
<feature type="binding site" evidence="1">
    <location>
        <position position="57"/>
    </location>
    <ligand>
        <name>ATP</name>
        <dbReference type="ChEBI" id="CHEBI:30616"/>
    </ligand>
</feature>
<feature type="binding site" evidence="1">
    <location>
        <position position="101"/>
    </location>
    <ligand>
        <name>ATP</name>
        <dbReference type="ChEBI" id="CHEBI:30616"/>
    </ligand>
</feature>
<feature type="binding site" evidence="1">
    <location>
        <position position="103"/>
    </location>
    <ligand>
        <name>Mg(2+)</name>
        <dbReference type="ChEBI" id="CHEBI:18420"/>
        <label>1</label>
    </ligand>
</feature>
<feature type="binding site" evidence="1">
    <location>
        <begin position="104"/>
        <end position="107"/>
    </location>
    <ligand>
        <name>substrate</name>
    </ligand>
</feature>
<feature type="binding site" evidence="1">
    <location>
        <position position="126"/>
    </location>
    <ligand>
        <name>substrate</name>
    </ligand>
</feature>
<feature type="binding site" evidence="1">
    <location>
        <position position="127"/>
    </location>
    <ligand>
        <name>Mg(2+)</name>
        <dbReference type="ChEBI" id="CHEBI:18420"/>
        <label>2</label>
    </ligand>
</feature>
<feature type="binding site" evidence="1">
    <location>
        <position position="252"/>
    </location>
    <ligand>
        <name>substrate</name>
    </ligand>
</feature>
<feature type="binding site" evidence="1">
    <location>
        <position position="280"/>
    </location>
    <ligand>
        <name>Mg(2+)</name>
        <dbReference type="ChEBI" id="CHEBI:18420"/>
        <label>2</label>
    </ligand>
</feature>
<feature type="binding site" evidence="1">
    <location>
        <begin position="324"/>
        <end position="326"/>
    </location>
    <ligand>
        <name>substrate</name>
    </ligand>
</feature>
<feature type="binding site" evidence="1">
    <location>
        <position position="512"/>
    </location>
    <ligand>
        <name>ATP</name>
        <dbReference type="ChEBI" id="CHEBI:30616"/>
    </ligand>
</feature>
<feature type="binding site" evidence="1">
    <location>
        <position position="549"/>
    </location>
    <ligand>
        <name>ATP</name>
        <dbReference type="ChEBI" id="CHEBI:30616"/>
    </ligand>
</feature>
<feature type="binding site" evidence="1">
    <location>
        <position position="550"/>
    </location>
    <ligand>
        <name>Mg(2+)</name>
        <dbReference type="ChEBI" id="CHEBI:18420"/>
        <label>1</label>
    </ligand>
</feature>
<feature type="binding site" evidence="1">
    <location>
        <position position="552"/>
    </location>
    <ligand>
        <name>substrate</name>
    </ligand>
</feature>
<name>PURL_MYCLE</name>